<comment type="function">
    <text evidence="1">Required for maturation of urease via the functional incorporation of the urease nickel metallocenter.</text>
</comment>
<comment type="subunit">
    <text evidence="1">UreD, UreF and UreG form a complex that acts as a GTP-hydrolysis-dependent molecular chaperone, activating the urease apoprotein by helping to assemble the nickel containing metallocenter of UreC. The UreE protein probably delivers the nickel.</text>
</comment>
<comment type="subcellular location">
    <subcellularLocation>
        <location evidence="1">Cytoplasm</location>
    </subcellularLocation>
</comment>
<comment type="similarity">
    <text evidence="1">Belongs to the UreD family.</text>
</comment>
<proteinExistence type="inferred from homology"/>
<organism>
    <name type="scientific">Staphylococcus epidermidis (strain ATCC 12228 / FDA PCI 1200)</name>
    <dbReference type="NCBI Taxonomy" id="176280"/>
    <lineage>
        <taxon>Bacteria</taxon>
        <taxon>Bacillati</taxon>
        <taxon>Bacillota</taxon>
        <taxon>Bacilli</taxon>
        <taxon>Bacillales</taxon>
        <taxon>Staphylococcaceae</taxon>
        <taxon>Staphylococcus</taxon>
    </lineage>
</organism>
<accession>Q8CNC5</accession>
<sequence>MAEQRWTGQLDLTVFNNGQSSKARNIFFEKALKVLRPIYLEQSPVPTFYIVNVGGGYLDGDRYRVNVNLEDNAQVTLTSQGATKIYKTPNDHVEQYQTFNLSNQSYMEFVADPIIAYENAKFFQHNTFNLKEDSAMFYTDILTPGYSSNGQDFTYNYMHLINEIYIDNQLVVFDNMMLSPDKSRLDGIGYMENYTHLGSAYFIHPDVNQSFIDDIYAAVADFQKQYDCRIGISQLPTHGLAVRILTKRTQIIEEILTRVQSYINQTIYHRQINFLRKY</sequence>
<feature type="chain" id="PRO_0000346604" description="Urease accessory protein UreD">
    <location>
        <begin position="1"/>
        <end position="278"/>
    </location>
</feature>
<name>URED_STAES</name>
<evidence type="ECO:0000255" key="1">
    <source>
        <dbReference type="HAMAP-Rule" id="MF_01384"/>
    </source>
</evidence>
<keyword id="KW-0143">Chaperone</keyword>
<keyword id="KW-0963">Cytoplasm</keyword>
<keyword id="KW-0996">Nickel insertion</keyword>
<gene>
    <name evidence="1" type="primary">ureD</name>
    <name type="ordered locus">SE_1867</name>
</gene>
<dbReference type="EMBL" id="AE015929">
    <property type="protein sequence ID" value="AAO05508.1"/>
    <property type="molecule type" value="Genomic_DNA"/>
</dbReference>
<dbReference type="RefSeq" id="NP_765422.1">
    <property type="nucleotide sequence ID" value="NC_004461.1"/>
</dbReference>
<dbReference type="RefSeq" id="WP_002485372.1">
    <property type="nucleotide sequence ID" value="NC_004461.1"/>
</dbReference>
<dbReference type="SMR" id="Q8CNC5"/>
<dbReference type="DNASU" id="1055730"/>
<dbReference type="KEGG" id="sep:SE_1867"/>
<dbReference type="PATRIC" id="fig|176280.10.peg.1824"/>
<dbReference type="eggNOG" id="COG0829">
    <property type="taxonomic scope" value="Bacteria"/>
</dbReference>
<dbReference type="HOGENOM" id="CLU_056339_5_0_9"/>
<dbReference type="OrthoDB" id="9807968at2"/>
<dbReference type="Proteomes" id="UP000001411">
    <property type="component" value="Chromosome"/>
</dbReference>
<dbReference type="GO" id="GO:0005737">
    <property type="term" value="C:cytoplasm"/>
    <property type="evidence" value="ECO:0007669"/>
    <property type="project" value="UniProtKB-SubCell"/>
</dbReference>
<dbReference type="GO" id="GO:0016151">
    <property type="term" value="F:nickel cation binding"/>
    <property type="evidence" value="ECO:0007669"/>
    <property type="project" value="UniProtKB-UniRule"/>
</dbReference>
<dbReference type="HAMAP" id="MF_01384">
    <property type="entry name" value="UreD"/>
    <property type="match status" value="1"/>
</dbReference>
<dbReference type="InterPro" id="IPR002669">
    <property type="entry name" value="UreD"/>
</dbReference>
<dbReference type="PANTHER" id="PTHR33643">
    <property type="entry name" value="UREASE ACCESSORY PROTEIN D"/>
    <property type="match status" value="1"/>
</dbReference>
<dbReference type="PANTHER" id="PTHR33643:SF1">
    <property type="entry name" value="UREASE ACCESSORY PROTEIN D"/>
    <property type="match status" value="1"/>
</dbReference>
<dbReference type="Pfam" id="PF01774">
    <property type="entry name" value="UreD"/>
    <property type="match status" value="1"/>
</dbReference>
<protein>
    <recommendedName>
        <fullName evidence="1">Urease accessory protein UreD</fullName>
    </recommendedName>
</protein>
<reference key="1">
    <citation type="journal article" date="2003" name="Mol. Microbiol.">
        <title>Genome-based analysis of virulence genes in a non-biofilm-forming Staphylococcus epidermidis strain (ATCC 12228).</title>
        <authorList>
            <person name="Zhang Y.-Q."/>
            <person name="Ren S.-X."/>
            <person name="Li H.-L."/>
            <person name="Wang Y.-X."/>
            <person name="Fu G."/>
            <person name="Yang J."/>
            <person name="Qin Z.-Q."/>
            <person name="Miao Y.-G."/>
            <person name="Wang W.-Y."/>
            <person name="Chen R.-S."/>
            <person name="Shen Y."/>
            <person name="Chen Z."/>
            <person name="Yuan Z.-H."/>
            <person name="Zhao G.-P."/>
            <person name="Qu D."/>
            <person name="Danchin A."/>
            <person name="Wen Y.-M."/>
        </authorList>
    </citation>
    <scope>NUCLEOTIDE SEQUENCE [LARGE SCALE GENOMIC DNA]</scope>
    <source>
        <strain>ATCC 12228 / FDA PCI 1200</strain>
    </source>
</reference>